<feature type="chain" id="PRO_0000056889" description="Anthranilate synthase component 2">
    <location>
        <begin position="1"/>
        <end position="196"/>
    </location>
</feature>
<feature type="domain" description="Glutamine amidotransferase type-1" evidence="3">
    <location>
        <begin position="3"/>
        <end position="196"/>
    </location>
</feature>
<feature type="active site" description="Nucleophile; for GATase activity" evidence="3">
    <location>
        <position position="89"/>
    </location>
</feature>
<feature type="active site" description="For GATase activity" evidence="3">
    <location>
        <position position="177"/>
    </location>
</feature>
<feature type="active site" description="For GATase activity" evidence="3">
    <location>
        <position position="179"/>
    </location>
</feature>
<feature type="binding site" evidence="2">
    <location>
        <begin position="60"/>
        <end position="62"/>
    </location>
    <ligand>
        <name>L-glutamine</name>
        <dbReference type="ChEBI" id="CHEBI:58359"/>
    </ligand>
</feature>
<feature type="binding site" evidence="2">
    <location>
        <position position="93"/>
    </location>
    <ligand>
        <name>L-glutamine</name>
        <dbReference type="ChEBI" id="CHEBI:58359"/>
    </ligand>
</feature>
<feature type="binding site" evidence="2">
    <location>
        <begin position="138"/>
        <end position="139"/>
    </location>
    <ligand>
        <name>L-glutamine</name>
        <dbReference type="ChEBI" id="CHEBI:58359"/>
    </ligand>
</feature>
<dbReference type="EC" id="4.1.3.27"/>
<dbReference type="EMBL" id="AE000666">
    <property type="protein sequence ID" value="AAB86128.1"/>
    <property type="molecule type" value="Genomic_DNA"/>
</dbReference>
<dbReference type="PIR" id="D69088">
    <property type="entry name" value="D69088"/>
</dbReference>
<dbReference type="RefSeq" id="WP_010877264.1">
    <property type="nucleotide sequence ID" value="NC_000916.1"/>
</dbReference>
<dbReference type="SMR" id="O27693"/>
<dbReference type="FunCoup" id="O27693">
    <property type="interactions" value="82"/>
</dbReference>
<dbReference type="STRING" id="187420.MTH_1656"/>
<dbReference type="MEROPS" id="C26.A25"/>
<dbReference type="PaxDb" id="187420-MTH_1656"/>
<dbReference type="EnsemblBacteria" id="AAB86128">
    <property type="protein sequence ID" value="AAB86128"/>
    <property type="gene ID" value="MTH_1656"/>
</dbReference>
<dbReference type="GeneID" id="1470741"/>
<dbReference type="KEGG" id="mth:MTH_1656"/>
<dbReference type="PATRIC" id="fig|187420.15.peg.1618"/>
<dbReference type="HOGENOM" id="CLU_014340_1_2_2"/>
<dbReference type="InParanoid" id="O27693"/>
<dbReference type="UniPathway" id="UPA00035">
    <property type="reaction ID" value="UER00040"/>
</dbReference>
<dbReference type="Proteomes" id="UP000005223">
    <property type="component" value="Chromosome"/>
</dbReference>
<dbReference type="GO" id="GO:0005829">
    <property type="term" value="C:cytosol"/>
    <property type="evidence" value="ECO:0007669"/>
    <property type="project" value="TreeGrafter"/>
</dbReference>
<dbReference type="GO" id="GO:0004049">
    <property type="term" value="F:anthranilate synthase activity"/>
    <property type="evidence" value="ECO:0007669"/>
    <property type="project" value="UniProtKB-EC"/>
</dbReference>
<dbReference type="GO" id="GO:0000162">
    <property type="term" value="P:L-tryptophan biosynthetic process"/>
    <property type="evidence" value="ECO:0007669"/>
    <property type="project" value="UniProtKB-UniPathway"/>
</dbReference>
<dbReference type="CDD" id="cd01743">
    <property type="entry name" value="GATase1_Anthranilate_Synthase"/>
    <property type="match status" value="1"/>
</dbReference>
<dbReference type="FunFam" id="3.40.50.880:FF:000003">
    <property type="entry name" value="Anthranilate synthase component II"/>
    <property type="match status" value="1"/>
</dbReference>
<dbReference type="Gene3D" id="3.40.50.880">
    <property type="match status" value="1"/>
</dbReference>
<dbReference type="InterPro" id="IPR050472">
    <property type="entry name" value="Anth_synth/Amidotransfase"/>
</dbReference>
<dbReference type="InterPro" id="IPR029062">
    <property type="entry name" value="Class_I_gatase-like"/>
</dbReference>
<dbReference type="InterPro" id="IPR017926">
    <property type="entry name" value="GATASE"/>
</dbReference>
<dbReference type="InterPro" id="IPR006221">
    <property type="entry name" value="TrpG/PapA_dom"/>
</dbReference>
<dbReference type="NCBIfam" id="TIGR00566">
    <property type="entry name" value="trpG_papA"/>
    <property type="match status" value="1"/>
</dbReference>
<dbReference type="PANTHER" id="PTHR43418:SF4">
    <property type="entry name" value="MULTIFUNCTIONAL TRYPTOPHAN BIOSYNTHESIS PROTEIN"/>
    <property type="match status" value="1"/>
</dbReference>
<dbReference type="PANTHER" id="PTHR43418">
    <property type="entry name" value="MULTIFUNCTIONAL TRYPTOPHAN BIOSYNTHESIS PROTEIN-RELATED"/>
    <property type="match status" value="1"/>
</dbReference>
<dbReference type="Pfam" id="PF00117">
    <property type="entry name" value="GATase"/>
    <property type="match status" value="1"/>
</dbReference>
<dbReference type="PRINTS" id="PR00097">
    <property type="entry name" value="ANTSNTHASEII"/>
</dbReference>
<dbReference type="PRINTS" id="PR00099">
    <property type="entry name" value="CPSGATASE"/>
</dbReference>
<dbReference type="PRINTS" id="PR00096">
    <property type="entry name" value="GATASE"/>
</dbReference>
<dbReference type="SUPFAM" id="SSF52317">
    <property type="entry name" value="Class I glutamine amidotransferase-like"/>
    <property type="match status" value="1"/>
</dbReference>
<dbReference type="PROSITE" id="PS51273">
    <property type="entry name" value="GATASE_TYPE_1"/>
    <property type="match status" value="1"/>
</dbReference>
<evidence type="ECO:0000250" key="1"/>
<evidence type="ECO:0000250" key="2">
    <source>
        <dbReference type="UniProtKB" id="P00900"/>
    </source>
</evidence>
<evidence type="ECO:0000255" key="3">
    <source>
        <dbReference type="PROSITE-ProRule" id="PRU00605"/>
    </source>
</evidence>
<sequence>MVVILIIDNYDSFTHNLYQLAGEILRDEGMDEEIMVLRNDEARISDLRALDPEKIIISPGPGNPSRRSDFGVCMDVIGEFTDRPLLGVCLGHQGIFHAFGGRVDQGEPVHGKIVEVFHDGSELFRDVPNPFRATRYHSLVCRPEDTPADIEVTAVTSDEIIMAIKHREYPVYGLQFHPESAGTPSGRTVIRNFLRM</sequence>
<gene>
    <name type="primary">trpG</name>
    <name type="ordered locus">MTH_1656</name>
</gene>
<proteinExistence type="inferred from homology"/>
<reference key="1">
    <citation type="journal article" date="1997" name="J. Bacteriol.">
        <title>Complete genome sequence of Methanobacterium thermoautotrophicum deltaH: functional analysis and comparative genomics.</title>
        <authorList>
            <person name="Smith D.R."/>
            <person name="Doucette-Stamm L.A."/>
            <person name="Deloughery C."/>
            <person name="Lee H.-M."/>
            <person name="Dubois J."/>
            <person name="Aldredge T."/>
            <person name="Bashirzadeh R."/>
            <person name="Blakely D."/>
            <person name="Cook R."/>
            <person name="Gilbert K."/>
            <person name="Harrison D."/>
            <person name="Hoang L."/>
            <person name="Keagle P."/>
            <person name="Lumm W."/>
            <person name="Pothier B."/>
            <person name="Qiu D."/>
            <person name="Spadafora R."/>
            <person name="Vicare R."/>
            <person name="Wang Y."/>
            <person name="Wierzbowski J."/>
            <person name="Gibson R."/>
            <person name="Jiwani N."/>
            <person name="Caruso A."/>
            <person name="Bush D."/>
            <person name="Safer H."/>
            <person name="Patwell D."/>
            <person name="Prabhakar S."/>
            <person name="McDougall S."/>
            <person name="Shimer G."/>
            <person name="Goyal A."/>
            <person name="Pietrovski S."/>
            <person name="Church G.M."/>
            <person name="Daniels C.J."/>
            <person name="Mao J.-I."/>
            <person name="Rice P."/>
            <person name="Noelling J."/>
            <person name="Reeve J.N."/>
        </authorList>
    </citation>
    <scope>NUCLEOTIDE SEQUENCE [LARGE SCALE GENOMIC DNA]</scope>
    <source>
        <strain>ATCC 29096 / DSM 1053 / JCM 10044 / NBRC 100330 / Delta H</strain>
    </source>
</reference>
<keyword id="KW-0028">Amino-acid biosynthesis</keyword>
<keyword id="KW-0057">Aromatic amino acid biosynthesis</keyword>
<keyword id="KW-0315">Glutamine amidotransferase</keyword>
<keyword id="KW-0456">Lyase</keyword>
<keyword id="KW-1185">Reference proteome</keyword>
<keyword id="KW-0822">Tryptophan biosynthesis</keyword>
<comment type="function">
    <text evidence="1">Part of a heterotetrameric complex that catalyzes the two-step biosynthesis of anthranilate, an intermediate in the biosynthesis of L-tryptophan. In the first step, the glutamine-binding beta subunit (TrpG) of anthranilate synthase (AS) provides the glutamine amidotransferase activity which generates ammonia as a substrate that, along with chorismate, is used in the second step, catalyzed by the large alpha subunit of AS (TrpE) to produce anthranilate. In the absence of TrpG, TrpE can synthesize anthranilate directly from chorismate and high concentrations of ammonia (By similarity).</text>
</comment>
<comment type="catalytic activity">
    <reaction>
        <text>chorismate + L-glutamine = anthranilate + pyruvate + L-glutamate + H(+)</text>
        <dbReference type="Rhea" id="RHEA:21732"/>
        <dbReference type="ChEBI" id="CHEBI:15361"/>
        <dbReference type="ChEBI" id="CHEBI:15378"/>
        <dbReference type="ChEBI" id="CHEBI:16567"/>
        <dbReference type="ChEBI" id="CHEBI:29748"/>
        <dbReference type="ChEBI" id="CHEBI:29985"/>
        <dbReference type="ChEBI" id="CHEBI:58359"/>
        <dbReference type="EC" id="4.1.3.27"/>
    </reaction>
</comment>
<comment type="pathway">
    <text>Amino-acid biosynthesis; L-tryptophan biosynthesis; L-tryptophan from chorismate: step 1/5.</text>
</comment>
<comment type="subunit">
    <text evidence="1">Heterotetramer consisting of two non-identical subunits: a beta subunit (TrpG) and a large alpha subunit (TrpE).</text>
</comment>
<name>TRPG_METTH</name>
<protein>
    <recommendedName>
        <fullName>Anthranilate synthase component 2</fullName>
        <shortName>AS</shortName>
        <shortName>ASII</shortName>
        <ecNumber>4.1.3.27</ecNumber>
    </recommendedName>
    <alternativeName>
        <fullName>Anthranilate synthase, GATase component</fullName>
    </alternativeName>
    <alternativeName>
        <fullName>Anthranilate synthase, glutamine amidotransferase component</fullName>
    </alternativeName>
</protein>
<organism>
    <name type="scientific">Methanothermobacter thermautotrophicus (strain ATCC 29096 / DSM 1053 / JCM 10044 / NBRC 100330 / Delta H)</name>
    <name type="common">Methanobacterium thermoautotrophicum</name>
    <dbReference type="NCBI Taxonomy" id="187420"/>
    <lineage>
        <taxon>Archaea</taxon>
        <taxon>Methanobacteriati</taxon>
        <taxon>Methanobacteriota</taxon>
        <taxon>Methanomada group</taxon>
        <taxon>Methanobacteria</taxon>
        <taxon>Methanobacteriales</taxon>
        <taxon>Methanobacteriaceae</taxon>
        <taxon>Methanothermobacter</taxon>
    </lineage>
</organism>
<accession>O27693</accession>